<proteinExistence type="inferred from homology"/>
<feature type="chain" id="PRO_0000083258" description="Replication protein 1a">
    <location>
        <begin position="1"/>
        <end position="993"/>
    </location>
</feature>
<feature type="domain" description="Alphavirus-like MT" evidence="3">
    <location>
        <begin position="72"/>
        <end position="290"/>
    </location>
</feature>
<feature type="domain" description="(+)RNA virus helicase ATP-binding">
    <location>
        <begin position="687"/>
        <end position="838"/>
    </location>
</feature>
<feature type="domain" description="(+)RNA virus helicase C-terminal">
    <location>
        <begin position="839"/>
        <end position="993"/>
    </location>
</feature>
<feature type="region of interest" description="Methyltransferase">
    <location>
        <begin position="51"/>
        <end position="409"/>
    </location>
</feature>
<feature type="region of interest" description="Disordered" evidence="4">
    <location>
        <begin position="538"/>
        <end position="561"/>
    </location>
</feature>
<feature type="region of interest" description="ATP-dependent helicase">
    <location>
        <begin position="712"/>
        <end position="975"/>
    </location>
</feature>
<feature type="compositionally biased region" description="Polar residues" evidence="4">
    <location>
        <begin position="542"/>
        <end position="556"/>
    </location>
</feature>
<feature type="binding site" evidence="2">
    <location>
        <begin position="714"/>
        <end position="721"/>
    </location>
    <ligand>
        <name>ATP</name>
        <dbReference type="ChEBI" id="CHEBI:30616"/>
    </ligand>
</feature>
<reference key="1">
    <citation type="journal article" date="1989" name="J. Gen. Virol.">
        <title>Nucleotide sequence and evolutionary relationships of cucumber mosaic virus (CMV) strains: CMV RNA 1.</title>
        <authorList>
            <person name="Rizzo T.M."/>
            <person name="Palukaitis P."/>
        </authorList>
    </citation>
    <scope>NUCLEOTIDE SEQUENCE [GENOMIC RNA]</scope>
</reference>
<organism>
    <name type="scientific">Cucumber mosaic virus (strain FNY)</name>
    <name type="common">CMV</name>
    <dbReference type="NCBI Taxonomy" id="12307"/>
    <lineage>
        <taxon>Viruses</taxon>
        <taxon>Riboviria</taxon>
        <taxon>Orthornavirae</taxon>
        <taxon>Kitrinoviricota</taxon>
        <taxon>Alsuviricetes</taxon>
        <taxon>Martellivirales</taxon>
        <taxon>Bromoviridae</taxon>
        <taxon>Cucumovirus</taxon>
        <taxon>Cucumber mosaic virus</taxon>
    </lineage>
</organism>
<dbReference type="EC" id="3.6.4.-"/>
<dbReference type="EC" id="2.1.1.-"/>
<dbReference type="EMBL" id="D00356">
    <property type="protein sequence ID" value="BAA00264.1"/>
    <property type="molecule type" value="Genomic_RNA"/>
</dbReference>
<dbReference type="PIR" id="JA0074">
    <property type="entry name" value="JA0074"/>
</dbReference>
<dbReference type="RefSeq" id="NP_049323.1">
    <property type="nucleotide sequence ID" value="NC_002034.1"/>
</dbReference>
<dbReference type="SMR" id="P17769"/>
<dbReference type="KEGG" id="vg:962641"/>
<dbReference type="Proteomes" id="UP000002502">
    <property type="component" value="Genome"/>
</dbReference>
<dbReference type="GO" id="GO:0044167">
    <property type="term" value="C:host cell endoplasmic reticulum membrane"/>
    <property type="evidence" value="ECO:0007669"/>
    <property type="project" value="UniProtKB-SubCell"/>
</dbReference>
<dbReference type="GO" id="GO:0016020">
    <property type="term" value="C:membrane"/>
    <property type="evidence" value="ECO:0007669"/>
    <property type="project" value="UniProtKB-KW"/>
</dbReference>
<dbReference type="GO" id="GO:0005524">
    <property type="term" value="F:ATP binding"/>
    <property type="evidence" value="ECO:0007669"/>
    <property type="project" value="UniProtKB-KW"/>
</dbReference>
<dbReference type="GO" id="GO:0004386">
    <property type="term" value="F:helicase activity"/>
    <property type="evidence" value="ECO:0007669"/>
    <property type="project" value="UniProtKB-KW"/>
</dbReference>
<dbReference type="GO" id="GO:0016817">
    <property type="term" value="F:hydrolase activity, acting on acid anhydrides"/>
    <property type="evidence" value="ECO:0007669"/>
    <property type="project" value="InterPro"/>
</dbReference>
<dbReference type="GO" id="GO:0008174">
    <property type="term" value="F:mRNA methyltransferase activity"/>
    <property type="evidence" value="ECO:0007669"/>
    <property type="project" value="InterPro"/>
</dbReference>
<dbReference type="GO" id="GO:0003723">
    <property type="term" value="F:RNA binding"/>
    <property type="evidence" value="ECO:0007669"/>
    <property type="project" value="InterPro"/>
</dbReference>
<dbReference type="GO" id="GO:0032259">
    <property type="term" value="P:methylation"/>
    <property type="evidence" value="ECO:0007669"/>
    <property type="project" value="UniProtKB-KW"/>
</dbReference>
<dbReference type="GO" id="GO:0016556">
    <property type="term" value="P:mRNA modification"/>
    <property type="evidence" value="ECO:0007669"/>
    <property type="project" value="InterPro"/>
</dbReference>
<dbReference type="GO" id="GO:0006396">
    <property type="term" value="P:RNA processing"/>
    <property type="evidence" value="ECO:0007669"/>
    <property type="project" value="InterPro"/>
</dbReference>
<dbReference type="Gene3D" id="3.40.50.300">
    <property type="entry name" value="P-loop containing nucleotide triphosphate hydrolases"/>
    <property type="match status" value="2"/>
</dbReference>
<dbReference type="InterPro" id="IPR027351">
    <property type="entry name" value="(+)RNA_virus_helicase_core_dom"/>
</dbReference>
<dbReference type="InterPro" id="IPR021002">
    <property type="entry name" value="1a_necrotic_phenotyp-det_dom"/>
</dbReference>
<dbReference type="InterPro" id="IPR002588">
    <property type="entry name" value="Alphavirus-like_MT_dom"/>
</dbReference>
<dbReference type="InterPro" id="IPR022184">
    <property type="entry name" value="CMV_1a_C"/>
</dbReference>
<dbReference type="InterPro" id="IPR027417">
    <property type="entry name" value="P-loop_NTPase"/>
</dbReference>
<dbReference type="Pfam" id="PF12467">
    <property type="entry name" value="CMV_1a"/>
    <property type="match status" value="1"/>
</dbReference>
<dbReference type="Pfam" id="PF12503">
    <property type="entry name" value="CMV_1a_C"/>
    <property type="match status" value="1"/>
</dbReference>
<dbReference type="Pfam" id="PF01443">
    <property type="entry name" value="Viral_helicase1"/>
    <property type="match status" value="1"/>
</dbReference>
<dbReference type="Pfam" id="PF01660">
    <property type="entry name" value="Vmethyltransf"/>
    <property type="match status" value="1"/>
</dbReference>
<dbReference type="SUPFAM" id="SSF52540">
    <property type="entry name" value="P-loop containing nucleoside triphosphate hydrolases"/>
    <property type="match status" value="1"/>
</dbReference>
<dbReference type="PROSITE" id="PS51743">
    <property type="entry name" value="ALPHAVIRUS_MT"/>
    <property type="match status" value="1"/>
</dbReference>
<dbReference type="PROSITE" id="PS51657">
    <property type="entry name" value="PSRV_HELICASE"/>
    <property type="match status" value="1"/>
</dbReference>
<keyword id="KW-0067">ATP-binding</keyword>
<keyword id="KW-0347">Helicase</keyword>
<keyword id="KW-1038">Host endoplasmic reticulum</keyword>
<keyword id="KW-1043">Host membrane</keyword>
<keyword id="KW-0378">Hydrolase</keyword>
<keyword id="KW-0472">Membrane</keyword>
<keyword id="KW-0489">Methyltransferase</keyword>
<keyword id="KW-0547">Nucleotide-binding</keyword>
<keyword id="KW-1185">Reference proteome</keyword>
<keyword id="KW-0808">Transferase</keyword>
<comment type="function">
    <text evidence="1">Involved in the virus replication. Contains a helicase domain and a methyltransferase domain. The methyltransferase domain is probably involved in viral RNA capping. Involved in the formation of ER membrane spherular invaginations in which RNA replication complexes form (By similarity).</text>
</comment>
<comment type="subunit">
    <text evidence="1">Interacts with RNA-directed RNA polymerase 2a.</text>
</comment>
<comment type="subcellular location">
    <subcellularLocation>
        <location evidence="1">Host endoplasmic reticulum membrane</location>
        <topology evidence="1">Peripheral membrane protein</topology>
    </subcellularLocation>
</comment>
<comment type="similarity">
    <text evidence="5">Belongs to the bromoviridae replication protein 1a family.</text>
</comment>
<accession>P17769</accession>
<accession>Q9WA94</accession>
<name>1A_CMVFN</name>
<gene>
    <name type="ORF">ORF1a</name>
</gene>
<sequence length="993" mass="111433">MATSSFNINELVASHGDKGLLATALVDKTAHEQLEEQLQHQRRGRKVYIRNVLGVKDSEVIRNRYGGKYDLHLTQQEFAPHGLAGALRLCETLDCLDSFPSSGLRQDLVLDFGGSWVTHYLRGHNVHCCSPCLGIRDKMRHAERLMNMRKIILNDPQQFDGRQPDFCTQPAADCKVQAHFAISIHGGYDMGFRGLCEAMNAHGTTILKGTMMFDGAMMFDDQGVIPELNCQWRKIRSAFSETEDVTPLVGKLNSTVFSRVRKFKTMVAFDFINESTMSYVHDWENIKSFLTDQTYSYRGMTYGIERCVIHAGIMTYKIIGVPGMCPPELIRHCIWFPSIKDYVGLKIPASQDLVEWKTVRILTSTLRETEEIAMRCYNDKKAWMEQFKVILGVLSAKSSTIVINGMSMQSGERIDINDYHYIGFAILLHTKMKYEQLGKMYDMWNASSISKWFAALTRPLRVFFSSVVHALFPTLRPREEKEFLIKLSTFVTFNEECSFDGGEEWDVISSAAYVATQAVTDGKILAAQKAEKLAEKLAQPVSEVSDSPETSSQTPDDTADVCGREREVSELDSLSAQTRSPITRVAERATAMLEYAAYEKQLHDTTVSNLKRIWNMAGGDDKRNSLEGNLKFVFDTYFTVDPMVNIHFSTGRWMRPVPEGIVYSVGYNERGLGPKSDGELYIVNSECVICNSESLSTVTRSLQAPTGTISQVDGVAGCGKTTAIKSIFEPSTDMIVTANKKSAQDVRMALFKSSDSKEACTFVRTADSVLLNECPTVSRVLVDEVVLLHFGQLCAVMSKLKAVRAICFGDSEQIAFSSRDASFDMRFSKIIPDETSDADTTFRSPQDVVPLVRLMATKALPKGTHSKYTKWVSQSKVKRSVTSRAIASVTLVDLDSSRFYITMTQADKASLISRAKEMNLPKTFWNERIKTVHESQGISEDHVTLVRLKSTKCDLFKQFSYCLVALTRHKVTFRYEYCGVLNGDLIAECVARA</sequence>
<protein>
    <recommendedName>
        <fullName>Replication protein 1a</fullName>
    </recommendedName>
    <domain>
        <recommendedName>
            <fullName>ATP-dependent helicase</fullName>
            <ecNumber>3.6.4.-</ecNumber>
        </recommendedName>
    </domain>
    <domain>
        <recommendedName>
            <fullName>Methyltransferase</fullName>
            <ecNumber>2.1.1.-</ecNumber>
        </recommendedName>
    </domain>
</protein>
<organismHost>
    <name type="scientific">Cucurbita pepo</name>
    <name type="common">Vegetable marrow</name>
    <name type="synonym">Summer squash</name>
    <dbReference type="NCBI Taxonomy" id="3663"/>
</organismHost>
<organismHost>
    <name type="scientific">Nicotiana tabacum</name>
    <name type="common">Common tobacco</name>
    <dbReference type="NCBI Taxonomy" id="4097"/>
</organismHost>
<evidence type="ECO:0000250" key="1"/>
<evidence type="ECO:0000255" key="2"/>
<evidence type="ECO:0000255" key="3">
    <source>
        <dbReference type="PROSITE-ProRule" id="PRU01079"/>
    </source>
</evidence>
<evidence type="ECO:0000256" key="4">
    <source>
        <dbReference type="SAM" id="MobiDB-lite"/>
    </source>
</evidence>
<evidence type="ECO:0000305" key="5"/>